<keyword id="KW-0963">Cytoplasm</keyword>
<keyword id="KW-0694">RNA-binding</keyword>
<feature type="chain" id="PRO_0000102961" description="SsrA-binding protein">
    <location>
        <begin position="1"/>
        <end position="152"/>
    </location>
</feature>
<proteinExistence type="inferred from homology"/>
<organism>
    <name type="scientific">Helicobacter pylori (strain J99 / ATCC 700824)</name>
    <name type="common">Campylobacter pylori J99</name>
    <dbReference type="NCBI Taxonomy" id="85963"/>
    <lineage>
        <taxon>Bacteria</taxon>
        <taxon>Pseudomonadati</taxon>
        <taxon>Campylobacterota</taxon>
        <taxon>Epsilonproteobacteria</taxon>
        <taxon>Campylobacterales</taxon>
        <taxon>Helicobacteraceae</taxon>
        <taxon>Helicobacter</taxon>
    </lineage>
</organism>
<comment type="function">
    <text evidence="1">Required for rescue of stalled ribosomes mediated by trans-translation. Binds to transfer-messenger RNA (tmRNA), required for stable association of tmRNA with ribosomes. tmRNA and SmpB together mimic tRNA shape, replacing the anticodon stem-loop with SmpB. tmRNA is encoded by the ssrA gene; the 2 termini fold to resemble tRNA(Ala) and it encodes a 'tag peptide', a short internal open reading frame. During trans-translation Ala-aminoacylated tmRNA acts like a tRNA, entering the A-site of stalled ribosomes, displacing the stalled mRNA. The ribosome then switches to translate the ORF on the tmRNA; the nascent peptide is terminated with the 'tag peptide' encoded by the tmRNA and targeted for degradation. The ribosome is freed to recommence translation, which seems to be the essential function of trans-translation.</text>
</comment>
<comment type="subcellular location">
    <subcellularLocation>
        <location evidence="1">Cytoplasm</location>
    </subcellularLocation>
    <text evidence="1">The tmRNA-SmpB complex associates with stalled 70S ribosomes.</text>
</comment>
<comment type="similarity">
    <text evidence="1">Belongs to the SmpB family.</text>
</comment>
<dbReference type="EMBL" id="AE001439">
    <property type="protein sequence ID" value="AAD06913.1"/>
    <property type="molecule type" value="Genomic_DNA"/>
</dbReference>
<dbReference type="PIR" id="G71820">
    <property type="entry name" value="G71820"/>
</dbReference>
<dbReference type="RefSeq" id="WP_000766484.1">
    <property type="nucleotide sequence ID" value="NZ_CP011330.1"/>
</dbReference>
<dbReference type="SMR" id="Q9ZJH2"/>
<dbReference type="KEGG" id="hpj:jhp_1337"/>
<dbReference type="PATRIC" id="fig|85963.30.peg.1216"/>
<dbReference type="eggNOG" id="COG0691">
    <property type="taxonomic scope" value="Bacteria"/>
</dbReference>
<dbReference type="Proteomes" id="UP000000804">
    <property type="component" value="Chromosome"/>
</dbReference>
<dbReference type="GO" id="GO:0005829">
    <property type="term" value="C:cytosol"/>
    <property type="evidence" value="ECO:0007669"/>
    <property type="project" value="TreeGrafter"/>
</dbReference>
<dbReference type="GO" id="GO:0003723">
    <property type="term" value="F:RNA binding"/>
    <property type="evidence" value="ECO:0007669"/>
    <property type="project" value="UniProtKB-UniRule"/>
</dbReference>
<dbReference type="GO" id="GO:0070929">
    <property type="term" value="P:trans-translation"/>
    <property type="evidence" value="ECO:0007669"/>
    <property type="project" value="UniProtKB-UniRule"/>
</dbReference>
<dbReference type="CDD" id="cd09294">
    <property type="entry name" value="SmpB"/>
    <property type="match status" value="1"/>
</dbReference>
<dbReference type="Gene3D" id="2.40.280.10">
    <property type="match status" value="1"/>
</dbReference>
<dbReference type="HAMAP" id="MF_00023">
    <property type="entry name" value="SmpB"/>
    <property type="match status" value="1"/>
</dbReference>
<dbReference type="InterPro" id="IPR023620">
    <property type="entry name" value="SmpB"/>
</dbReference>
<dbReference type="InterPro" id="IPR000037">
    <property type="entry name" value="SsrA-bd_prot"/>
</dbReference>
<dbReference type="InterPro" id="IPR020081">
    <property type="entry name" value="SsrA-bd_prot_CS"/>
</dbReference>
<dbReference type="NCBIfam" id="NF003843">
    <property type="entry name" value="PRK05422.1"/>
    <property type="match status" value="1"/>
</dbReference>
<dbReference type="NCBIfam" id="TIGR00086">
    <property type="entry name" value="smpB"/>
    <property type="match status" value="1"/>
</dbReference>
<dbReference type="PANTHER" id="PTHR30308:SF2">
    <property type="entry name" value="SSRA-BINDING PROTEIN"/>
    <property type="match status" value="1"/>
</dbReference>
<dbReference type="PANTHER" id="PTHR30308">
    <property type="entry name" value="TMRNA-BINDING COMPONENT OF TRANS-TRANSLATION TAGGING COMPLEX"/>
    <property type="match status" value="1"/>
</dbReference>
<dbReference type="Pfam" id="PF01668">
    <property type="entry name" value="SmpB"/>
    <property type="match status" value="1"/>
</dbReference>
<dbReference type="SUPFAM" id="SSF74982">
    <property type="entry name" value="Small protein B (SmpB)"/>
    <property type="match status" value="1"/>
</dbReference>
<dbReference type="PROSITE" id="PS01317">
    <property type="entry name" value="SSRP"/>
    <property type="match status" value="1"/>
</dbReference>
<protein>
    <recommendedName>
        <fullName evidence="1">SsrA-binding protein</fullName>
    </recommendedName>
    <alternativeName>
        <fullName evidence="1">Small protein B</fullName>
    </alternativeName>
</protein>
<reference key="1">
    <citation type="journal article" date="1999" name="Nature">
        <title>Genomic sequence comparison of two unrelated isolates of the human gastric pathogen Helicobacter pylori.</title>
        <authorList>
            <person name="Alm R.A."/>
            <person name="Ling L.-S.L."/>
            <person name="Moir D.T."/>
            <person name="King B.L."/>
            <person name="Brown E.D."/>
            <person name="Doig P.C."/>
            <person name="Smith D.R."/>
            <person name="Noonan B."/>
            <person name="Guild B.C."/>
            <person name="deJonge B.L."/>
            <person name="Carmel G."/>
            <person name="Tummino P.J."/>
            <person name="Caruso A."/>
            <person name="Uria-Nickelsen M."/>
            <person name="Mills D.M."/>
            <person name="Ives C."/>
            <person name="Gibson R."/>
            <person name="Merberg D."/>
            <person name="Mills S.D."/>
            <person name="Jiang Q."/>
            <person name="Taylor D.E."/>
            <person name="Vovis G.F."/>
            <person name="Trust T.J."/>
        </authorList>
    </citation>
    <scope>NUCLEOTIDE SEQUENCE [LARGE SCALE GENOMIC DNA]</scope>
    <source>
        <strain>J99 / ATCC 700824</strain>
    </source>
</reference>
<evidence type="ECO:0000255" key="1">
    <source>
        <dbReference type="HAMAP-Rule" id="MF_00023"/>
    </source>
</evidence>
<gene>
    <name evidence="1" type="primary">smpB</name>
    <name type="ordered locus">jhp_1337</name>
</gene>
<sequence length="152" mass="17814">MKLIASNKKAYFDYEILETLEAGLALLGSEVKALRQTRVNLKDNFVKIIKGEAFLFGVHISYLDTIHAYYKPNERRERKLLLHKKQLLKWQMEASKERLSIVGLKLYFNQKNRAKIQIALVKGKRLHDKRQSLKEKALNKEILADLKHHFKG</sequence>
<accession>Q9ZJH2</accession>
<name>SSRP_HELPJ</name>